<reference key="1">
    <citation type="journal article" date="2002" name="Mol. Microbiol.">
        <title>Genome sequence of Streptococcus agalactiae, a pathogen causing invasive neonatal disease.</title>
        <authorList>
            <person name="Glaser P."/>
            <person name="Rusniok C."/>
            <person name="Buchrieser C."/>
            <person name="Chevalier F."/>
            <person name="Frangeul L."/>
            <person name="Msadek T."/>
            <person name="Zouine M."/>
            <person name="Couve E."/>
            <person name="Lalioui L."/>
            <person name="Poyart C."/>
            <person name="Trieu-Cuot P."/>
            <person name="Kunst F."/>
        </authorList>
    </citation>
    <scope>NUCLEOTIDE SEQUENCE [LARGE SCALE GENOMIC DNA]</scope>
    <source>
        <strain>NEM316</strain>
    </source>
</reference>
<comment type="function">
    <text evidence="1">Transport of potassium into the cell. Likely operates as a K(+):H(+) symporter.</text>
</comment>
<comment type="catalytic activity">
    <reaction evidence="1">
        <text>K(+)(in) + H(+)(in) = K(+)(out) + H(+)(out)</text>
        <dbReference type="Rhea" id="RHEA:28490"/>
        <dbReference type="ChEBI" id="CHEBI:15378"/>
        <dbReference type="ChEBI" id="CHEBI:29103"/>
    </reaction>
    <physiologicalReaction direction="right-to-left" evidence="1">
        <dbReference type="Rhea" id="RHEA:28492"/>
    </physiologicalReaction>
</comment>
<comment type="subcellular location">
    <subcellularLocation>
        <location evidence="1">Cell membrane</location>
        <topology evidence="1">Multi-pass membrane protein</topology>
    </subcellularLocation>
</comment>
<comment type="similarity">
    <text evidence="1">Belongs to the HAK/KUP transporter (TC 2.A.72) family.</text>
</comment>
<proteinExistence type="inferred from homology"/>
<keyword id="KW-1003">Cell membrane</keyword>
<keyword id="KW-0406">Ion transport</keyword>
<keyword id="KW-0472">Membrane</keyword>
<keyword id="KW-0630">Potassium</keyword>
<keyword id="KW-0633">Potassium transport</keyword>
<keyword id="KW-0769">Symport</keyword>
<keyword id="KW-0812">Transmembrane</keyword>
<keyword id="KW-1133">Transmembrane helix</keyword>
<keyword id="KW-0813">Transport</keyword>
<dbReference type="EMBL" id="AL766849">
    <property type="protein sequence ID" value="CAD46816.1"/>
    <property type="molecule type" value="Genomic_DNA"/>
</dbReference>
<dbReference type="RefSeq" id="WP_001164944.1">
    <property type="nucleotide sequence ID" value="NC_004368.1"/>
</dbReference>
<dbReference type="KEGG" id="san:gbs1157"/>
<dbReference type="eggNOG" id="COG3158">
    <property type="taxonomic scope" value="Bacteria"/>
</dbReference>
<dbReference type="HOGENOM" id="CLU_008142_4_1_9"/>
<dbReference type="Proteomes" id="UP000000823">
    <property type="component" value="Chromosome"/>
</dbReference>
<dbReference type="GO" id="GO:0005886">
    <property type="term" value="C:plasma membrane"/>
    <property type="evidence" value="ECO:0007669"/>
    <property type="project" value="UniProtKB-SubCell"/>
</dbReference>
<dbReference type="GO" id="GO:0015079">
    <property type="term" value="F:potassium ion transmembrane transporter activity"/>
    <property type="evidence" value="ECO:0007669"/>
    <property type="project" value="UniProtKB-UniRule"/>
</dbReference>
<dbReference type="GO" id="GO:0015293">
    <property type="term" value="F:symporter activity"/>
    <property type="evidence" value="ECO:0007669"/>
    <property type="project" value="UniProtKB-UniRule"/>
</dbReference>
<dbReference type="HAMAP" id="MF_01522">
    <property type="entry name" value="Kup"/>
    <property type="match status" value="1"/>
</dbReference>
<dbReference type="InterPro" id="IPR003855">
    <property type="entry name" value="K+_transporter"/>
</dbReference>
<dbReference type="InterPro" id="IPR053952">
    <property type="entry name" value="K_trans_C"/>
</dbReference>
<dbReference type="InterPro" id="IPR053951">
    <property type="entry name" value="K_trans_N"/>
</dbReference>
<dbReference type="InterPro" id="IPR023051">
    <property type="entry name" value="Kup"/>
</dbReference>
<dbReference type="PANTHER" id="PTHR30540">
    <property type="entry name" value="OSMOTIC STRESS POTASSIUM TRANSPORTER"/>
    <property type="match status" value="1"/>
</dbReference>
<dbReference type="PANTHER" id="PTHR30540:SF20">
    <property type="entry name" value="POTASSIUM TRANSPORTER 6"/>
    <property type="match status" value="1"/>
</dbReference>
<dbReference type="Pfam" id="PF02705">
    <property type="entry name" value="K_trans"/>
    <property type="match status" value="1"/>
</dbReference>
<dbReference type="Pfam" id="PF22776">
    <property type="entry name" value="K_trans_C"/>
    <property type="match status" value="1"/>
</dbReference>
<evidence type="ECO:0000255" key="1">
    <source>
        <dbReference type="HAMAP-Rule" id="MF_01522"/>
    </source>
</evidence>
<protein>
    <recommendedName>
        <fullName evidence="1">Probable potassium transport system protein Kup</fullName>
    </recommendedName>
</protein>
<feature type="chain" id="PRO_0000209059" description="Probable potassium transport system protein Kup">
    <location>
        <begin position="1"/>
        <end position="666"/>
    </location>
</feature>
<feature type="transmembrane region" description="Helical" evidence="1">
    <location>
        <begin position="16"/>
        <end position="36"/>
    </location>
</feature>
<feature type="transmembrane region" description="Helical" evidence="1">
    <location>
        <begin position="58"/>
        <end position="78"/>
    </location>
</feature>
<feature type="transmembrane region" description="Helical" evidence="1">
    <location>
        <begin position="99"/>
        <end position="119"/>
    </location>
</feature>
<feature type="transmembrane region" description="Helical" evidence="1">
    <location>
        <begin position="141"/>
        <end position="161"/>
    </location>
</feature>
<feature type="transmembrane region" description="Helical" evidence="1">
    <location>
        <begin position="167"/>
        <end position="187"/>
    </location>
</feature>
<feature type="transmembrane region" description="Helical" evidence="1">
    <location>
        <begin position="221"/>
        <end position="241"/>
    </location>
</feature>
<feature type="transmembrane region" description="Helical" evidence="1">
    <location>
        <begin position="253"/>
        <end position="273"/>
    </location>
</feature>
<feature type="transmembrane region" description="Helical" evidence="1">
    <location>
        <begin position="292"/>
        <end position="312"/>
    </location>
</feature>
<feature type="transmembrane region" description="Helical" evidence="1">
    <location>
        <begin position="343"/>
        <end position="363"/>
    </location>
</feature>
<feature type="transmembrane region" description="Helical" evidence="1">
    <location>
        <begin position="373"/>
        <end position="393"/>
    </location>
</feature>
<feature type="transmembrane region" description="Helical" evidence="1">
    <location>
        <begin position="402"/>
        <end position="422"/>
    </location>
</feature>
<feature type="transmembrane region" description="Helical" evidence="1">
    <location>
        <begin position="424"/>
        <end position="444"/>
    </location>
</feature>
<sequence>MQHVNHSSFDKASKAGFIIALGIVYGDIGTSPLYTMQSLVENQGGISSVTESFILGSISLIIWTLTLITTIKYVLVALKADNHHEGGIFSLYTLVRKMTPWLIVPAVIGGATLLSDGALTPAVTVTSAVEGLKVVPSLQHIFQNQSNVIFATLFILLLLFAIQRFGTGVIGKLFGPIMFIWFAFLGISGLLNSFAHPEVFKAINPYYGLKLLFSPENHKGIFILGSIFLATTGAEALYSDLGHVGRGNIHVSWPFVKVAIILSYCGQGAWILANKNAGNELNPFFASIPSQFTMHVVILATLAAIIASQALISGSFTLVSEAMRLKIFPQFRSTYPGDNIGQTYIPVINWFLFAITTSIVLLFKTSAHMEAAYGLAITITMLMTTILLSFFLIQKGVKRGLVLLMMIFFGILEGIFFLASAVKFMHGGYVVVIIAVAIIFIMIIWYKGSKIVSRYVKLLDLKDYIGQLDKLRHDHRYPIYHTNVVYLTNRMEGDMIDKSIMYSILDKRPKKAQVYWFVNIKVTDEPYTAEYKVDMMGTDFIVKVELYLGFKMRQTVSRYLRTIVEELLESGRLPKQGKTYSVRPDSKVGDFRFIVLDERFSSSQNLKPGERFVMLMKSSVKHWTATPIRWFGLQFSEVTTEVVPLIFTANRGLPIKEKIELTTTGD</sequence>
<name>KUP_STRA3</name>
<gene>
    <name evidence="1" type="primary">kup</name>
    <name type="ordered locus">gbs1157</name>
</gene>
<organism>
    <name type="scientific">Streptococcus agalactiae serotype III (strain NEM316)</name>
    <dbReference type="NCBI Taxonomy" id="211110"/>
    <lineage>
        <taxon>Bacteria</taxon>
        <taxon>Bacillati</taxon>
        <taxon>Bacillota</taxon>
        <taxon>Bacilli</taxon>
        <taxon>Lactobacillales</taxon>
        <taxon>Streptococcaceae</taxon>
        <taxon>Streptococcus</taxon>
    </lineage>
</organism>
<accession>Q8E575</accession>